<sequence length="446" mass="50495">MENISDLWNSALKELEKKVSKPSYETWLKSTTAHNLKKDVLTITAPNEFARDWLESHYSELISETLYDLTGAKLAIRFIIPQSQAEEEIDLPPAKPNAAQDDSNHLPQSMLNPKYTFDTFVIGSGNRFAHAASLAVAEAPAKAYNPLFIYGGVGLGKTHLMHAIGHYVIEHNPNAKVVYLSSEKFTNEFINSIRDNKAVDFRNKYRNVDVLLIDDIQFLAGKEQTQEEFFHTFNALHEESKQIVISSDRPPKEIPTLEDRLRSRFEWGLITDITPPDLETRIAILRKKAKAEGLDIPNEVMLYIANQIDSNIRELEGALIRVVAYSSLINKDINADLAAEALKDIIPNSKPKIISIYDIQKAVGDVYQVKLEDFKAKKRTKSVAFPRQIAMYLSRELTDSSLPKIGEEFGGRDHTTVIHAHEKISKLLKTDTQLQKQVEEINDILK</sequence>
<proteinExistence type="inferred from homology"/>
<reference key="1">
    <citation type="submission" date="2008-10" db="EMBL/GenBank/DDBJ databases">
        <title>Genome sequence of Bacillus anthracis str. CDC 684.</title>
        <authorList>
            <person name="Dodson R.J."/>
            <person name="Munk A.C."/>
            <person name="Brettin T."/>
            <person name="Bruce D."/>
            <person name="Detter C."/>
            <person name="Tapia R."/>
            <person name="Han C."/>
            <person name="Sutton G."/>
            <person name="Sims D."/>
        </authorList>
    </citation>
    <scope>NUCLEOTIDE SEQUENCE [LARGE SCALE GENOMIC DNA]</scope>
    <source>
        <strain>CDC 684 / NRRL 3495</strain>
    </source>
</reference>
<feature type="chain" id="PRO_1000189779" description="Chromosomal replication initiator protein DnaA">
    <location>
        <begin position="1"/>
        <end position="446"/>
    </location>
</feature>
<feature type="region of interest" description="Domain I, interacts with DnaA modulators" evidence="1">
    <location>
        <begin position="1"/>
        <end position="92"/>
    </location>
</feature>
<feature type="region of interest" description="Domain II" evidence="1">
    <location>
        <begin position="93"/>
        <end position="109"/>
    </location>
</feature>
<feature type="region of interest" description="Domain III, AAA+ region" evidence="1">
    <location>
        <begin position="110"/>
        <end position="326"/>
    </location>
</feature>
<feature type="region of interest" description="Domain IV, binds dsDNA" evidence="1">
    <location>
        <begin position="327"/>
        <end position="446"/>
    </location>
</feature>
<feature type="binding site" evidence="1">
    <location>
        <position position="154"/>
    </location>
    <ligand>
        <name>ATP</name>
        <dbReference type="ChEBI" id="CHEBI:30616"/>
    </ligand>
</feature>
<feature type="binding site" evidence="1">
    <location>
        <position position="156"/>
    </location>
    <ligand>
        <name>ATP</name>
        <dbReference type="ChEBI" id="CHEBI:30616"/>
    </ligand>
</feature>
<feature type="binding site" evidence="1">
    <location>
        <position position="157"/>
    </location>
    <ligand>
        <name>ATP</name>
        <dbReference type="ChEBI" id="CHEBI:30616"/>
    </ligand>
</feature>
<feature type="binding site" evidence="1">
    <location>
        <position position="158"/>
    </location>
    <ligand>
        <name>ATP</name>
        <dbReference type="ChEBI" id="CHEBI:30616"/>
    </ligand>
</feature>
<accession>C3LIC2</accession>
<protein>
    <recommendedName>
        <fullName evidence="1">Chromosomal replication initiator protein DnaA</fullName>
    </recommendedName>
</protein>
<comment type="function">
    <text evidence="1">Plays an essential role in the initiation and regulation of chromosomal replication. ATP-DnaA binds to the origin of replication (oriC) to initiate formation of the DNA replication initiation complex once per cell cycle. Binds the DnaA box (a 9 base pair repeat at the origin) and separates the double-stranded (ds)DNA. Forms a right-handed helical filament on oriC DNA; dsDNA binds to the exterior of the filament while single-stranded (ss)DNA is stabiized in the filament's interior. The ATP-DnaA-oriC complex binds and stabilizes one strand of the AT-rich DNA unwinding element (DUE), permitting loading of DNA polymerase. After initiation quickly degrades to an ADP-DnaA complex that is not apt for DNA replication. Binds acidic phospholipids.</text>
</comment>
<comment type="subunit">
    <text evidence="1">Oligomerizes as a right-handed, spiral filament on DNA at oriC.</text>
</comment>
<comment type="subcellular location">
    <subcellularLocation>
        <location evidence="1">Cytoplasm</location>
    </subcellularLocation>
</comment>
<comment type="domain">
    <text evidence="1">Domain I is involved in oligomerization and binding regulators, domain II is flexibile and of varying length in different bacteria, domain III forms the AAA+ region, while domain IV binds dsDNA.</text>
</comment>
<comment type="similarity">
    <text evidence="1">Belongs to the DnaA family.</text>
</comment>
<organism>
    <name type="scientific">Bacillus anthracis (strain CDC 684 / NRRL 3495)</name>
    <dbReference type="NCBI Taxonomy" id="568206"/>
    <lineage>
        <taxon>Bacteria</taxon>
        <taxon>Bacillati</taxon>
        <taxon>Bacillota</taxon>
        <taxon>Bacilli</taxon>
        <taxon>Bacillales</taxon>
        <taxon>Bacillaceae</taxon>
        <taxon>Bacillus</taxon>
        <taxon>Bacillus cereus group</taxon>
    </lineage>
</organism>
<evidence type="ECO:0000255" key="1">
    <source>
        <dbReference type="HAMAP-Rule" id="MF_00377"/>
    </source>
</evidence>
<keyword id="KW-0067">ATP-binding</keyword>
<keyword id="KW-0963">Cytoplasm</keyword>
<keyword id="KW-0235">DNA replication</keyword>
<keyword id="KW-0238">DNA-binding</keyword>
<keyword id="KW-0446">Lipid-binding</keyword>
<keyword id="KW-0547">Nucleotide-binding</keyword>
<gene>
    <name evidence="1" type="primary">dnaA</name>
    <name type="ordered locus">BAMEG_0001</name>
</gene>
<name>DNAA_BACAC</name>
<dbReference type="EMBL" id="CP001215">
    <property type="protein sequence ID" value="ACP15693.1"/>
    <property type="molecule type" value="Genomic_DNA"/>
</dbReference>
<dbReference type="RefSeq" id="WP_000428021.1">
    <property type="nucleotide sequence ID" value="NC_012581.1"/>
</dbReference>
<dbReference type="SMR" id="C3LIC2"/>
<dbReference type="GeneID" id="45020035"/>
<dbReference type="KEGG" id="bah:BAMEG_0001"/>
<dbReference type="HOGENOM" id="CLU_026910_3_1_9"/>
<dbReference type="GO" id="GO:0005737">
    <property type="term" value="C:cytoplasm"/>
    <property type="evidence" value="ECO:0007669"/>
    <property type="project" value="UniProtKB-SubCell"/>
</dbReference>
<dbReference type="GO" id="GO:0005886">
    <property type="term" value="C:plasma membrane"/>
    <property type="evidence" value="ECO:0007669"/>
    <property type="project" value="TreeGrafter"/>
</dbReference>
<dbReference type="GO" id="GO:0005524">
    <property type="term" value="F:ATP binding"/>
    <property type="evidence" value="ECO:0007669"/>
    <property type="project" value="UniProtKB-UniRule"/>
</dbReference>
<dbReference type="GO" id="GO:0016887">
    <property type="term" value="F:ATP hydrolysis activity"/>
    <property type="evidence" value="ECO:0007669"/>
    <property type="project" value="InterPro"/>
</dbReference>
<dbReference type="GO" id="GO:0003688">
    <property type="term" value="F:DNA replication origin binding"/>
    <property type="evidence" value="ECO:0007669"/>
    <property type="project" value="UniProtKB-UniRule"/>
</dbReference>
<dbReference type="GO" id="GO:0008289">
    <property type="term" value="F:lipid binding"/>
    <property type="evidence" value="ECO:0007669"/>
    <property type="project" value="UniProtKB-KW"/>
</dbReference>
<dbReference type="GO" id="GO:0006270">
    <property type="term" value="P:DNA replication initiation"/>
    <property type="evidence" value="ECO:0007669"/>
    <property type="project" value="UniProtKB-UniRule"/>
</dbReference>
<dbReference type="GO" id="GO:0006275">
    <property type="term" value="P:regulation of DNA replication"/>
    <property type="evidence" value="ECO:0007669"/>
    <property type="project" value="UniProtKB-UniRule"/>
</dbReference>
<dbReference type="CDD" id="cd00009">
    <property type="entry name" value="AAA"/>
    <property type="match status" value="1"/>
</dbReference>
<dbReference type="CDD" id="cd06571">
    <property type="entry name" value="Bac_DnaA_C"/>
    <property type="match status" value="1"/>
</dbReference>
<dbReference type="FunFam" id="1.10.1750.10:FF:000003">
    <property type="entry name" value="Chromosomal replication initiator protein DnaA"/>
    <property type="match status" value="1"/>
</dbReference>
<dbReference type="FunFam" id="1.10.8.60:FF:000003">
    <property type="entry name" value="Chromosomal replication initiator protein DnaA"/>
    <property type="match status" value="1"/>
</dbReference>
<dbReference type="FunFam" id="3.30.300.180:FF:000002">
    <property type="entry name" value="Chromosomal replication initiator protein DnaA"/>
    <property type="match status" value="1"/>
</dbReference>
<dbReference type="FunFam" id="3.40.50.300:FF:000150">
    <property type="entry name" value="Chromosomal replication initiator protein DnaA"/>
    <property type="match status" value="1"/>
</dbReference>
<dbReference type="Gene3D" id="1.10.1750.10">
    <property type="match status" value="1"/>
</dbReference>
<dbReference type="Gene3D" id="1.10.8.60">
    <property type="match status" value="1"/>
</dbReference>
<dbReference type="Gene3D" id="3.30.300.180">
    <property type="match status" value="1"/>
</dbReference>
<dbReference type="Gene3D" id="3.40.50.300">
    <property type="entry name" value="P-loop containing nucleotide triphosphate hydrolases"/>
    <property type="match status" value="1"/>
</dbReference>
<dbReference type="HAMAP" id="MF_00377">
    <property type="entry name" value="DnaA_bact"/>
    <property type="match status" value="1"/>
</dbReference>
<dbReference type="InterPro" id="IPR003593">
    <property type="entry name" value="AAA+_ATPase"/>
</dbReference>
<dbReference type="InterPro" id="IPR001957">
    <property type="entry name" value="Chromosome_initiator_DnaA"/>
</dbReference>
<dbReference type="InterPro" id="IPR020591">
    <property type="entry name" value="Chromosome_initiator_DnaA-like"/>
</dbReference>
<dbReference type="InterPro" id="IPR018312">
    <property type="entry name" value="Chromosome_initiator_DnaA_CS"/>
</dbReference>
<dbReference type="InterPro" id="IPR013159">
    <property type="entry name" value="DnaA_C"/>
</dbReference>
<dbReference type="InterPro" id="IPR013317">
    <property type="entry name" value="DnaA_dom"/>
</dbReference>
<dbReference type="InterPro" id="IPR024633">
    <property type="entry name" value="DnaA_N_dom"/>
</dbReference>
<dbReference type="InterPro" id="IPR038454">
    <property type="entry name" value="DnaA_N_sf"/>
</dbReference>
<dbReference type="InterPro" id="IPR027417">
    <property type="entry name" value="P-loop_NTPase"/>
</dbReference>
<dbReference type="InterPro" id="IPR010921">
    <property type="entry name" value="Trp_repressor/repl_initiator"/>
</dbReference>
<dbReference type="NCBIfam" id="TIGR00362">
    <property type="entry name" value="DnaA"/>
    <property type="match status" value="1"/>
</dbReference>
<dbReference type="NCBIfam" id="NF010686">
    <property type="entry name" value="PRK14086.1"/>
    <property type="match status" value="1"/>
</dbReference>
<dbReference type="PANTHER" id="PTHR30050">
    <property type="entry name" value="CHROMOSOMAL REPLICATION INITIATOR PROTEIN DNAA"/>
    <property type="match status" value="1"/>
</dbReference>
<dbReference type="PANTHER" id="PTHR30050:SF2">
    <property type="entry name" value="CHROMOSOMAL REPLICATION INITIATOR PROTEIN DNAA"/>
    <property type="match status" value="1"/>
</dbReference>
<dbReference type="Pfam" id="PF00308">
    <property type="entry name" value="Bac_DnaA"/>
    <property type="match status" value="1"/>
</dbReference>
<dbReference type="Pfam" id="PF08299">
    <property type="entry name" value="Bac_DnaA_C"/>
    <property type="match status" value="1"/>
</dbReference>
<dbReference type="Pfam" id="PF11638">
    <property type="entry name" value="DnaA_N"/>
    <property type="match status" value="1"/>
</dbReference>
<dbReference type="PRINTS" id="PR00051">
    <property type="entry name" value="DNAA"/>
</dbReference>
<dbReference type="SMART" id="SM00382">
    <property type="entry name" value="AAA"/>
    <property type="match status" value="1"/>
</dbReference>
<dbReference type="SMART" id="SM00760">
    <property type="entry name" value="Bac_DnaA_C"/>
    <property type="match status" value="1"/>
</dbReference>
<dbReference type="SUPFAM" id="SSF52540">
    <property type="entry name" value="P-loop containing nucleoside triphosphate hydrolases"/>
    <property type="match status" value="1"/>
</dbReference>
<dbReference type="SUPFAM" id="SSF48295">
    <property type="entry name" value="TrpR-like"/>
    <property type="match status" value="1"/>
</dbReference>
<dbReference type="PROSITE" id="PS01008">
    <property type="entry name" value="DNAA"/>
    <property type="match status" value="1"/>
</dbReference>